<comment type="function">
    <text evidence="2">Catalyzes the insertion of Co(2+) into sirohydrochlorin as part of the anaerobic pathway to cobalamin biosynthesis. To a lesser extent, is also able to insert Fe(2+) into sirohydrochlorin, yielding siroheme.</text>
</comment>
<comment type="catalytic activity">
    <reaction evidence="2">
        <text>Co-sirohydrochlorin + 2 H(+) = sirohydrochlorin + Co(2+)</text>
        <dbReference type="Rhea" id="RHEA:15893"/>
        <dbReference type="ChEBI" id="CHEBI:15378"/>
        <dbReference type="ChEBI" id="CHEBI:48828"/>
        <dbReference type="ChEBI" id="CHEBI:58351"/>
        <dbReference type="ChEBI" id="CHEBI:60049"/>
        <dbReference type="EC" id="4.99.1.3"/>
    </reaction>
</comment>
<comment type="catalytic activity">
    <reaction evidence="2">
        <text>siroheme + 2 H(+) = sirohydrochlorin + Fe(2+)</text>
        <dbReference type="Rhea" id="RHEA:24360"/>
        <dbReference type="ChEBI" id="CHEBI:15378"/>
        <dbReference type="ChEBI" id="CHEBI:29033"/>
        <dbReference type="ChEBI" id="CHEBI:58351"/>
        <dbReference type="ChEBI" id="CHEBI:60052"/>
        <dbReference type="EC" id="4.99.1.4"/>
    </reaction>
</comment>
<comment type="pathway">
    <text>Cofactor biosynthesis; adenosylcobalamin biosynthesis; cob(II)yrinate a,c-diamide from sirohydrochlorin (anaerobic route): step 1/10.</text>
</comment>
<comment type="pathway">
    <text>Porphyrin-containing compound metabolism; siroheme biosynthesis; siroheme from sirohydrochlorin: step 1/1.</text>
</comment>
<comment type="subcellular location">
    <subcellularLocation>
        <location evidence="2">Cytoplasm</location>
    </subcellularLocation>
</comment>
<comment type="miscellaneous">
    <text>Desulfovibrio vulgaris possesses two versions of CbiK encoded within the genome, one cytoplasmic (CbiKC) and one periplasmic (CbiKP).</text>
</comment>
<comment type="similarity">
    <text evidence="3">Belongs to the CbiK family.</text>
</comment>
<reference key="1">
    <citation type="journal article" date="2004" name="Nat. Biotechnol.">
        <title>The genome sequence of the anaerobic, sulfate-reducing bacterium Desulfovibrio vulgaris Hildenborough.</title>
        <authorList>
            <person name="Heidelberg J.F."/>
            <person name="Seshadri R."/>
            <person name="Haveman S.A."/>
            <person name="Hemme C.L."/>
            <person name="Paulsen I.T."/>
            <person name="Kolonay J.F."/>
            <person name="Eisen J.A."/>
            <person name="Ward N.L."/>
            <person name="Methe B.A."/>
            <person name="Brinkac L.M."/>
            <person name="Daugherty S.C."/>
            <person name="DeBoy R.T."/>
            <person name="Dodson R.J."/>
            <person name="Durkin A.S."/>
            <person name="Madupu R."/>
            <person name="Nelson W.C."/>
            <person name="Sullivan S.A."/>
            <person name="Fouts D.E."/>
            <person name="Haft D.H."/>
            <person name="Selengut J."/>
            <person name="Peterson J.D."/>
            <person name="Davidsen T.M."/>
            <person name="Zafar N."/>
            <person name="Zhou L."/>
            <person name="Radune D."/>
            <person name="Dimitrov G."/>
            <person name="Hance M."/>
            <person name="Tran K."/>
            <person name="Khouri H.M."/>
            <person name="Gill J."/>
            <person name="Utterback T.R."/>
            <person name="Feldblyum T.V."/>
            <person name="Wall J.D."/>
            <person name="Voordouw G."/>
            <person name="Fraser C.M."/>
        </authorList>
    </citation>
    <scope>NUCLEOTIDE SEQUENCE [LARGE SCALE GENOMIC DNA]</scope>
    <source>
        <strain>ATCC 29579 / DSM 644 / CCUG 34227 / NCIMB 8303 / VKM B-1760 / Hildenborough</strain>
    </source>
</reference>
<reference key="2">
    <citation type="journal article" date="2008" name="Biochemistry">
        <title>Two distinct roles for two functional cobaltochelatases (CbiK) in Desulfovibrio vulgaris hildenborough.</title>
        <authorList>
            <person name="Lobo S.A."/>
            <person name="Brindley A.A."/>
            <person name="Romao C.V."/>
            <person name="Leech H.K."/>
            <person name="Warren M.J."/>
            <person name="Saraiva L.M."/>
        </authorList>
    </citation>
    <scope>FUNCTION</scope>
    <scope>CATALYTIC ACTIVITY</scope>
    <scope>SUBCELLULAR LOCATION</scope>
    <source>
        <strain>ATCC 29579 / DSM 644 / CCUG 34227 / NCIMB 8303 / VKM B-1760 / Hildenborough</strain>
    </source>
</reference>
<proteinExistence type="evidence at protein level"/>
<gene>
    <name type="primary">cbiKc</name>
    <name type="ordered locus">DVU_1365</name>
</gene>
<keyword id="KW-0169">Cobalamin biosynthesis</keyword>
<keyword id="KW-0170">Cobalt</keyword>
<keyword id="KW-0963">Cytoplasm</keyword>
<keyword id="KW-0456">Lyase</keyword>
<keyword id="KW-0479">Metal-binding</keyword>
<keyword id="KW-0627">Porphyrin biosynthesis</keyword>
<keyword id="KW-1185">Reference proteome</keyword>
<feature type="chain" id="PRO_0000407986" description="Sirohydrochlorin cobaltochelatase CbiKC">
    <location>
        <begin position="1"/>
        <end position="282"/>
    </location>
</feature>
<feature type="active site" description="Proton acceptor" evidence="1">
    <location>
        <position position="166"/>
    </location>
</feature>
<feature type="binding site" evidence="1">
    <location>
        <position position="166"/>
    </location>
    <ligand>
        <name>Co(2+)</name>
        <dbReference type="ChEBI" id="CHEBI:48828"/>
    </ligand>
</feature>
<feature type="binding site" evidence="1">
    <location>
        <position position="228"/>
    </location>
    <ligand>
        <name>Co(2+)</name>
        <dbReference type="ChEBI" id="CHEBI:48828"/>
    </ligand>
</feature>
<dbReference type="EC" id="4.99.1.3"/>
<dbReference type="EC" id="4.99.1.4"/>
<dbReference type="EMBL" id="AE017285">
    <property type="protein sequence ID" value="AAS95843.1"/>
    <property type="molecule type" value="Genomic_DNA"/>
</dbReference>
<dbReference type="RefSeq" id="WP_010938660.1">
    <property type="nucleotide sequence ID" value="NC_002937.3"/>
</dbReference>
<dbReference type="RefSeq" id="YP_010584.1">
    <property type="nucleotide sequence ID" value="NC_002937.3"/>
</dbReference>
<dbReference type="SMR" id="Q72CB8"/>
<dbReference type="STRING" id="882.DVU_1365"/>
<dbReference type="PaxDb" id="882-DVU_1365"/>
<dbReference type="EnsemblBacteria" id="AAS95843">
    <property type="protein sequence ID" value="AAS95843"/>
    <property type="gene ID" value="DVU_1365"/>
</dbReference>
<dbReference type="KEGG" id="dvu:DVU_1365"/>
<dbReference type="PATRIC" id="fig|882.5.peg.1276"/>
<dbReference type="eggNOG" id="COG4822">
    <property type="taxonomic scope" value="Bacteria"/>
</dbReference>
<dbReference type="HOGENOM" id="CLU_036584_1_1_7"/>
<dbReference type="OrthoDB" id="9770331at2"/>
<dbReference type="PhylomeDB" id="Q72CB8"/>
<dbReference type="BRENDA" id="4.99.1.3">
    <property type="organism ID" value="1914"/>
</dbReference>
<dbReference type="UniPathway" id="UPA00148">
    <property type="reaction ID" value="UER00223"/>
</dbReference>
<dbReference type="UniPathway" id="UPA00262">
    <property type="reaction ID" value="UER00376"/>
</dbReference>
<dbReference type="Proteomes" id="UP000002194">
    <property type="component" value="Chromosome"/>
</dbReference>
<dbReference type="GO" id="GO:0005737">
    <property type="term" value="C:cytoplasm"/>
    <property type="evidence" value="ECO:0000304"/>
    <property type="project" value="UniProtKB"/>
</dbReference>
<dbReference type="GO" id="GO:0046872">
    <property type="term" value="F:metal ion binding"/>
    <property type="evidence" value="ECO:0007669"/>
    <property type="project" value="UniProtKB-KW"/>
</dbReference>
<dbReference type="GO" id="GO:0016852">
    <property type="term" value="F:sirohydrochlorin cobaltochelatase activity"/>
    <property type="evidence" value="ECO:0000314"/>
    <property type="project" value="UniProtKB"/>
</dbReference>
<dbReference type="GO" id="GO:0051266">
    <property type="term" value="F:sirohydrochlorin ferrochelatase activity"/>
    <property type="evidence" value="ECO:0000314"/>
    <property type="project" value="UniProtKB"/>
</dbReference>
<dbReference type="GO" id="GO:0019251">
    <property type="term" value="P:anaerobic cobalamin biosynthetic process"/>
    <property type="evidence" value="ECO:0000304"/>
    <property type="project" value="UniProtKB"/>
</dbReference>
<dbReference type="GO" id="GO:0019354">
    <property type="term" value="P:siroheme biosynthetic process"/>
    <property type="evidence" value="ECO:0007669"/>
    <property type="project" value="UniProtKB-UniPathway"/>
</dbReference>
<dbReference type="CDD" id="cd03413">
    <property type="entry name" value="CbiK_C"/>
    <property type="match status" value="1"/>
</dbReference>
<dbReference type="CDD" id="cd03412">
    <property type="entry name" value="CbiK_N"/>
    <property type="match status" value="1"/>
</dbReference>
<dbReference type="Gene3D" id="3.40.50.1400">
    <property type="match status" value="2"/>
</dbReference>
<dbReference type="InterPro" id="IPR010388">
    <property type="entry name" value="Anaerobic_Co-chelatase"/>
</dbReference>
<dbReference type="Pfam" id="PF06180">
    <property type="entry name" value="CbiK"/>
    <property type="match status" value="1"/>
</dbReference>
<dbReference type="PIRSF" id="PIRSF033579">
    <property type="entry name" value="Anaer_Co_chel"/>
    <property type="match status" value="1"/>
</dbReference>
<dbReference type="SUPFAM" id="SSF53800">
    <property type="entry name" value="Chelatase"/>
    <property type="match status" value="1"/>
</dbReference>
<protein>
    <recommendedName>
        <fullName>Sirohydrochlorin cobaltochelatase CbiKC</fullName>
        <ecNumber>4.99.1.3</ecNumber>
    </recommendedName>
    <alternativeName>
        <fullName>Sirohydrochlorin ferrochelatase CbiKC</fullName>
        <ecNumber>4.99.1.4</ecNumber>
    </alternativeName>
</protein>
<accession>Q72CB8</accession>
<name>CBIKC_NITV2</name>
<evidence type="ECO:0000250" key="1">
    <source>
        <dbReference type="UniProtKB" id="Q72EC8"/>
    </source>
</evidence>
<evidence type="ECO:0000269" key="2">
    <source>
    </source>
</evidence>
<evidence type="ECO:0000305" key="3"/>
<organism>
    <name type="scientific">Nitratidesulfovibrio vulgaris (strain ATCC 29579 / DSM 644 / CCUG 34227 / NCIMB 8303 / VKM B-1760 / Hildenborough)</name>
    <name type="common">Desulfovibrio vulgaris</name>
    <dbReference type="NCBI Taxonomy" id="882"/>
    <lineage>
        <taxon>Bacteria</taxon>
        <taxon>Pseudomonadati</taxon>
        <taxon>Thermodesulfobacteriota</taxon>
        <taxon>Desulfovibrionia</taxon>
        <taxon>Desulfovibrionales</taxon>
        <taxon>Desulfovibrionaceae</taxon>
        <taxon>Nitratidesulfovibrio</taxon>
    </lineage>
</organism>
<sequence length="282" mass="30825">MVPPRWGSLDSLKPQQHLPMTKKGILLAAFGSGNRQGESTLRLFDERVRERFPGVPVRWAFTSVIMRRRLAAARKKTDSVLKALQKMWFEKYTHVAVQSLHIIPGAEYGDLVADVEAMRRDDGFTAATVGAPLLAGSGDMERSAAALLAHLPAGRKPDEAVVFMGHGTRHPAESSYEALAALVRRVDPHVHIGTMGGSRTLDHILPELQQGGVKGVWLMPLLSVVGRHATEDMAGTDPESWKSRLEASGLRCIPVLRGTAEYEGFVDIWLDHLTAAVSALDD</sequence>